<name>LEPA_BURM9</name>
<dbReference type="EC" id="3.6.5.n1" evidence="1"/>
<dbReference type="EMBL" id="CP000546">
    <property type="protein sequence ID" value="ABN02042.1"/>
    <property type="molecule type" value="Genomic_DNA"/>
</dbReference>
<dbReference type="RefSeq" id="WP_004193305.1">
    <property type="nucleotide sequence ID" value="NC_008836.1"/>
</dbReference>
<dbReference type="SMR" id="A2S9Z3"/>
<dbReference type="GeneID" id="93061011"/>
<dbReference type="KEGG" id="bml:BMA10229_A2813"/>
<dbReference type="HOGENOM" id="CLU_009995_3_3_4"/>
<dbReference type="Proteomes" id="UP000002283">
    <property type="component" value="Chromosome I"/>
</dbReference>
<dbReference type="GO" id="GO:0005886">
    <property type="term" value="C:plasma membrane"/>
    <property type="evidence" value="ECO:0007669"/>
    <property type="project" value="UniProtKB-SubCell"/>
</dbReference>
<dbReference type="GO" id="GO:0005525">
    <property type="term" value="F:GTP binding"/>
    <property type="evidence" value="ECO:0007669"/>
    <property type="project" value="UniProtKB-UniRule"/>
</dbReference>
<dbReference type="GO" id="GO:0003924">
    <property type="term" value="F:GTPase activity"/>
    <property type="evidence" value="ECO:0007669"/>
    <property type="project" value="UniProtKB-UniRule"/>
</dbReference>
<dbReference type="GO" id="GO:0097216">
    <property type="term" value="F:guanosine tetraphosphate binding"/>
    <property type="evidence" value="ECO:0007669"/>
    <property type="project" value="UniProtKB-ARBA"/>
</dbReference>
<dbReference type="GO" id="GO:0043022">
    <property type="term" value="F:ribosome binding"/>
    <property type="evidence" value="ECO:0007669"/>
    <property type="project" value="UniProtKB-UniRule"/>
</dbReference>
<dbReference type="GO" id="GO:0003746">
    <property type="term" value="F:translation elongation factor activity"/>
    <property type="evidence" value="ECO:0007669"/>
    <property type="project" value="UniProtKB-UniRule"/>
</dbReference>
<dbReference type="GO" id="GO:0045727">
    <property type="term" value="P:positive regulation of translation"/>
    <property type="evidence" value="ECO:0007669"/>
    <property type="project" value="UniProtKB-UniRule"/>
</dbReference>
<dbReference type="CDD" id="cd03699">
    <property type="entry name" value="EF4_II"/>
    <property type="match status" value="1"/>
</dbReference>
<dbReference type="CDD" id="cd16260">
    <property type="entry name" value="EF4_III"/>
    <property type="match status" value="1"/>
</dbReference>
<dbReference type="CDD" id="cd01890">
    <property type="entry name" value="LepA"/>
    <property type="match status" value="1"/>
</dbReference>
<dbReference type="CDD" id="cd03709">
    <property type="entry name" value="lepA_C"/>
    <property type="match status" value="1"/>
</dbReference>
<dbReference type="FunFam" id="3.40.50.300:FF:000078">
    <property type="entry name" value="Elongation factor 4"/>
    <property type="match status" value="1"/>
</dbReference>
<dbReference type="FunFam" id="2.40.30.10:FF:000015">
    <property type="entry name" value="Translation factor GUF1, mitochondrial"/>
    <property type="match status" value="1"/>
</dbReference>
<dbReference type="FunFam" id="3.30.70.240:FF:000007">
    <property type="entry name" value="Translation factor GUF1, mitochondrial"/>
    <property type="match status" value="1"/>
</dbReference>
<dbReference type="FunFam" id="3.30.70.2570:FF:000001">
    <property type="entry name" value="Translation factor GUF1, mitochondrial"/>
    <property type="match status" value="1"/>
</dbReference>
<dbReference type="FunFam" id="3.30.70.870:FF:000004">
    <property type="entry name" value="Translation factor GUF1, mitochondrial"/>
    <property type="match status" value="1"/>
</dbReference>
<dbReference type="Gene3D" id="3.30.70.240">
    <property type="match status" value="1"/>
</dbReference>
<dbReference type="Gene3D" id="3.30.70.2570">
    <property type="entry name" value="Elongation factor 4, C-terminal domain"/>
    <property type="match status" value="1"/>
</dbReference>
<dbReference type="Gene3D" id="3.30.70.870">
    <property type="entry name" value="Elongation Factor G (Translational Gtpase), domain 3"/>
    <property type="match status" value="1"/>
</dbReference>
<dbReference type="Gene3D" id="3.40.50.300">
    <property type="entry name" value="P-loop containing nucleotide triphosphate hydrolases"/>
    <property type="match status" value="1"/>
</dbReference>
<dbReference type="Gene3D" id="2.40.30.10">
    <property type="entry name" value="Translation factors"/>
    <property type="match status" value="1"/>
</dbReference>
<dbReference type="HAMAP" id="MF_00071">
    <property type="entry name" value="LepA"/>
    <property type="match status" value="1"/>
</dbReference>
<dbReference type="InterPro" id="IPR006297">
    <property type="entry name" value="EF-4"/>
</dbReference>
<dbReference type="InterPro" id="IPR035647">
    <property type="entry name" value="EFG_III/V"/>
</dbReference>
<dbReference type="InterPro" id="IPR000640">
    <property type="entry name" value="EFG_V-like"/>
</dbReference>
<dbReference type="InterPro" id="IPR004161">
    <property type="entry name" value="EFTu-like_2"/>
</dbReference>
<dbReference type="InterPro" id="IPR031157">
    <property type="entry name" value="G_TR_CS"/>
</dbReference>
<dbReference type="InterPro" id="IPR038363">
    <property type="entry name" value="LepA_C_sf"/>
</dbReference>
<dbReference type="InterPro" id="IPR013842">
    <property type="entry name" value="LepA_CTD"/>
</dbReference>
<dbReference type="InterPro" id="IPR035654">
    <property type="entry name" value="LepA_IV"/>
</dbReference>
<dbReference type="InterPro" id="IPR027417">
    <property type="entry name" value="P-loop_NTPase"/>
</dbReference>
<dbReference type="InterPro" id="IPR005225">
    <property type="entry name" value="Small_GTP-bd"/>
</dbReference>
<dbReference type="InterPro" id="IPR000795">
    <property type="entry name" value="T_Tr_GTP-bd_dom"/>
</dbReference>
<dbReference type="InterPro" id="IPR009000">
    <property type="entry name" value="Transl_B-barrel_sf"/>
</dbReference>
<dbReference type="NCBIfam" id="TIGR01393">
    <property type="entry name" value="lepA"/>
    <property type="match status" value="1"/>
</dbReference>
<dbReference type="NCBIfam" id="TIGR00231">
    <property type="entry name" value="small_GTP"/>
    <property type="match status" value="1"/>
</dbReference>
<dbReference type="PANTHER" id="PTHR43512:SF4">
    <property type="entry name" value="TRANSLATION FACTOR GUF1 HOMOLOG, CHLOROPLASTIC"/>
    <property type="match status" value="1"/>
</dbReference>
<dbReference type="PANTHER" id="PTHR43512">
    <property type="entry name" value="TRANSLATION FACTOR GUF1-RELATED"/>
    <property type="match status" value="1"/>
</dbReference>
<dbReference type="Pfam" id="PF00679">
    <property type="entry name" value="EFG_C"/>
    <property type="match status" value="1"/>
</dbReference>
<dbReference type="Pfam" id="PF00009">
    <property type="entry name" value="GTP_EFTU"/>
    <property type="match status" value="1"/>
</dbReference>
<dbReference type="Pfam" id="PF03144">
    <property type="entry name" value="GTP_EFTU_D2"/>
    <property type="match status" value="1"/>
</dbReference>
<dbReference type="Pfam" id="PF06421">
    <property type="entry name" value="LepA_C"/>
    <property type="match status" value="1"/>
</dbReference>
<dbReference type="PRINTS" id="PR00315">
    <property type="entry name" value="ELONGATNFCT"/>
</dbReference>
<dbReference type="SMART" id="SM00838">
    <property type="entry name" value="EFG_C"/>
    <property type="match status" value="1"/>
</dbReference>
<dbReference type="SUPFAM" id="SSF54980">
    <property type="entry name" value="EF-G C-terminal domain-like"/>
    <property type="match status" value="2"/>
</dbReference>
<dbReference type="SUPFAM" id="SSF52540">
    <property type="entry name" value="P-loop containing nucleoside triphosphate hydrolases"/>
    <property type="match status" value="1"/>
</dbReference>
<dbReference type="SUPFAM" id="SSF50447">
    <property type="entry name" value="Translation proteins"/>
    <property type="match status" value="1"/>
</dbReference>
<dbReference type="PROSITE" id="PS00301">
    <property type="entry name" value="G_TR_1"/>
    <property type="match status" value="1"/>
</dbReference>
<dbReference type="PROSITE" id="PS51722">
    <property type="entry name" value="G_TR_2"/>
    <property type="match status" value="1"/>
</dbReference>
<sequence>MDHIRNFSIIAHIDHGKSTLADRIIQLCGGLSDREMESQVLDSMDLERERGITIKAQTAALTYRARDGKVYNLNLIDTPGHVDFSYEVSRSLSACEGALLVVDASQGVEAQTVANCYTAIELGVEVVPVLNKIDLPAANPENAIAEIEDVIGIDAMDAVRCSAKTGLGVEDVLESLIAKVPPPKGDPDAPLQALIIDSWFDNYVGVVMLVRIVNGTLRPKERIKLMATDAQYAVEHVGVFTPKSRNLESLSAGQVGFIISGIKELTAAKVGDTVTHATKPAPEPLPGFKEVKPQVFAGLYPVEANQYDALRESLEKLKLNDASLQYEPEVSQALGFGFRCGFLGLLHMEIVQERLEREFDMDLITTAPTVVYEVVQSDGTTIMVENPAKMPEPARIAEIREPIVTVNLYMPQDYVGSVITLCEQKRGTQINMQYHGRQVQLTYEIPMAEIVLDFFDRLKSVSRGYASMDYEFKEYRTSDVVKVDMLINGDKVDALSIIVHRSQSQYRGREVAAKMREIIPRQMYDVAIQAAIGAHIIARENIKALRKNVLAKCYGGDITRKKKLLEKQKEGKKRMKQVGSVEIPQEAFLAILRVEDK</sequence>
<comment type="function">
    <text evidence="1">Required for accurate and efficient protein synthesis under certain stress conditions. May act as a fidelity factor of the translation reaction, by catalyzing a one-codon backward translocation of tRNAs on improperly translocated ribosomes. Back-translocation proceeds from a post-translocation (POST) complex to a pre-translocation (PRE) complex, thus giving elongation factor G a second chance to translocate the tRNAs correctly. Binds to ribosomes in a GTP-dependent manner.</text>
</comment>
<comment type="catalytic activity">
    <reaction evidence="1">
        <text>GTP + H2O = GDP + phosphate + H(+)</text>
        <dbReference type="Rhea" id="RHEA:19669"/>
        <dbReference type="ChEBI" id="CHEBI:15377"/>
        <dbReference type="ChEBI" id="CHEBI:15378"/>
        <dbReference type="ChEBI" id="CHEBI:37565"/>
        <dbReference type="ChEBI" id="CHEBI:43474"/>
        <dbReference type="ChEBI" id="CHEBI:58189"/>
        <dbReference type="EC" id="3.6.5.n1"/>
    </reaction>
</comment>
<comment type="subcellular location">
    <subcellularLocation>
        <location evidence="1">Cell inner membrane</location>
        <topology evidence="1">Peripheral membrane protein</topology>
        <orientation evidence="1">Cytoplasmic side</orientation>
    </subcellularLocation>
</comment>
<comment type="similarity">
    <text evidence="1">Belongs to the TRAFAC class translation factor GTPase superfamily. Classic translation factor GTPase family. LepA subfamily.</text>
</comment>
<keyword id="KW-0997">Cell inner membrane</keyword>
<keyword id="KW-1003">Cell membrane</keyword>
<keyword id="KW-0342">GTP-binding</keyword>
<keyword id="KW-0378">Hydrolase</keyword>
<keyword id="KW-0472">Membrane</keyword>
<keyword id="KW-0547">Nucleotide-binding</keyword>
<keyword id="KW-0648">Protein biosynthesis</keyword>
<organism>
    <name type="scientific">Burkholderia mallei (strain NCTC 10229)</name>
    <dbReference type="NCBI Taxonomy" id="412022"/>
    <lineage>
        <taxon>Bacteria</taxon>
        <taxon>Pseudomonadati</taxon>
        <taxon>Pseudomonadota</taxon>
        <taxon>Betaproteobacteria</taxon>
        <taxon>Burkholderiales</taxon>
        <taxon>Burkholderiaceae</taxon>
        <taxon>Burkholderia</taxon>
        <taxon>pseudomallei group</taxon>
    </lineage>
</organism>
<gene>
    <name evidence="1" type="primary">lepA</name>
    <name type="ordered locus">BMA10229_A2813</name>
</gene>
<reference key="1">
    <citation type="journal article" date="2010" name="Genome Biol. Evol.">
        <title>Continuing evolution of Burkholderia mallei through genome reduction and large-scale rearrangements.</title>
        <authorList>
            <person name="Losada L."/>
            <person name="Ronning C.M."/>
            <person name="DeShazer D."/>
            <person name="Woods D."/>
            <person name="Fedorova N."/>
            <person name="Kim H.S."/>
            <person name="Shabalina S.A."/>
            <person name="Pearson T.R."/>
            <person name="Brinkac L."/>
            <person name="Tan P."/>
            <person name="Nandi T."/>
            <person name="Crabtree J."/>
            <person name="Badger J."/>
            <person name="Beckstrom-Sternberg S."/>
            <person name="Saqib M."/>
            <person name="Schutzer S.E."/>
            <person name="Keim P."/>
            <person name="Nierman W.C."/>
        </authorList>
    </citation>
    <scope>NUCLEOTIDE SEQUENCE [LARGE SCALE GENOMIC DNA]</scope>
    <source>
        <strain>NCTC 10229</strain>
    </source>
</reference>
<protein>
    <recommendedName>
        <fullName evidence="1">Elongation factor 4</fullName>
        <shortName evidence="1">EF-4</shortName>
        <ecNumber evidence="1">3.6.5.n1</ecNumber>
    </recommendedName>
    <alternativeName>
        <fullName evidence="1">Ribosomal back-translocase LepA</fullName>
    </alternativeName>
</protein>
<accession>A2S9Z3</accession>
<feature type="chain" id="PRO_1000031975" description="Elongation factor 4">
    <location>
        <begin position="1"/>
        <end position="597"/>
    </location>
</feature>
<feature type="domain" description="tr-type G">
    <location>
        <begin position="2"/>
        <end position="184"/>
    </location>
</feature>
<feature type="binding site" evidence="1">
    <location>
        <begin position="14"/>
        <end position="19"/>
    </location>
    <ligand>
        <name>GTP</name>
        <dbReference type="ChEBI" id="CHEBI:37565"/>
    </ligand>
</feature>
<feature type="binding site" evidence="1">
    <location>
        <begin position="131"/>
        <end position="134"/>
    </location>
    <ligand>
        <name>GTP</name>
        <dbReference type="ChEBI" id="CHEBI:37565"/>
    </ligand>
</feature>
<evidence type="ECO:0000255" key="1">
    <source>
        <dbReference type="HAMAP-Rule" id="MF_00071"/>
    </source>
</evidence>
<proteinExistence type="inferred from homology"/>